<organism>
    <name type="scientific">Acidithiobacillus ferridurans</name>
    <dbReference type="NCBI Taxonomy" id="1232575"/>
    <lineage>
        <taxon>Bacteria</taxon>
        <taxon>Pseudomonadati</taxon>
        <taxon>Pseudomonadota</taxon>
        <taxon>Acidithiobacillia</taxon>
        <taxon>Acidithiobacillales</taxon>
        <taxon>Acidithiobacillaceae</taxon>
        <taxon>Acidithiobacillus</taxon>
    </lineage>
</organism>
<accession>P20088</accession>
<protein>
    <recommendedName>
        <fullName>Uncharacterized 12.3 kDa protein in mobL 3'region</fullName>
    </recommendedName>
    <alternativeName>
        <fullName>ORF 4</fullName>
    </alternativeName>
</protein>
<proteinExistence type="predicted"/>
<evidence type="ECO:0000256" key="1">
    <source>
        <dbReference type="SAM" id="MobiDB-lite"/>
    </source>
</evidence>
<keyword id="KW-0614">Plasmid</keyword>
<feature type="chain" id="PRO_0000068505" description="Uncharacterized 12.3 kDa protein in mobL 3'region">
    <location>
        <begin position="1"/>
        <end position="108"/>
    </location>
</feature>
<feature type="region of interest" description="Disordered" evidence="1">
    <location>
        <begin position="39"/>
        <end position="95"/>
    </location>
</feature>
<feature type="compositionally biased region" description="Low complexity" evidence="1">
    <location>
        <begin position="39"/>
        <end position="68"/>
    </location>
</feature>
<feature type="compositionally biased region" description="Basic residues" evidence="1">
    <location>
        <begin position="69"/>
        <end position="80"/>
    </location>
</feature>
<geneLocation type="plasmid">
    <name>pTF1</name>
</geneLocation>
<sequence length="108" mass="12335">MISSGKPWNGWPVPKRKVCWSENRGDWSEVSLTCQAICGLRSRSGTGSGNSRNGLKESGGSRSGPGKPRGNRKSSRRIRPRPTSEKPRGYWRSSWRRPRSWIERRKRP</sequence>
<name>YML2_ACIFI</name>
<reference key="1">
    <citation type="journal article" date="1990" name="Mol. Microbiol.">
        <title>The mobilization and origin of transfer regions of a Thiobacillus ferrooxidans plasmid: relatedness to plasmids RSF1010 and pSC101.</title>
        <authorList>
            <person name="Drolet M."/>
            <person name="Zanga P."/>
            <person name="Lau P.C.K."/>
        </authorList>
    </citation>
    <scope>NUCLEOTIDE SEQUENCE [GENOMIC DNA]</scope>
    <source>
        <strain>ATCC 33020 / DSM 29468 / JCM 18981 / 11Fe</strain>
    </source>
</reference>
<dbReference type="EMBL" id="X52699">
    <property type="protein sequence ID" value="CAA36930.1"/>
    <property type="molecule type" value="Genomic_DNA"/>
</dbReference>
<dbReference type="PIR" id="S12193">
    <property type="entry name" value="S12193"/>
</dbReference>